<protein>
    <recommendedName>
        <fullName evidence="1">tRNA dimethylallyltransferase</fullName>
        <ecNumber evidence="1">2.5.1.75</ecNumber>
    </recommendedName>
    <alternativeName>
        <fullName evidence="1">Dimethylallyl diphosphate:tRNA dimethylallyltransferase</fullName>
        <shortName evidence="1">DMAPP:tRNA dimethylallyltransferase</shortName>
        <shortName evidence="1">DMATase</shortName>
    </alternativeName>
    <alternativeName>
        <fullName evidence="1">Isopentenyl-diphosphate:tRNA isopentenyltransferase</fullName>
        <shortName evidence="1">IPP transferase</shortName>
        <shortName evidence="1">IPPT</shortName>
        <shortName evidence="1">IPTase</shortName>
    </alternativeName>
</protein>
<sequence length="319" mass="35575">MKEKRALFVAGPTCSGKSALALAVAERLGGTVINADSMQIYRELRILTARPDQEEEARVPHRLYGVLPASQPGSAAWWRDQAITAMEESWQQGRLPILCGGTGLYFHALMHGFADIPDPGEEARQEARSLLAELGPESLHARLAEADPATAARLKPQDSQRIARAWEVWRGTESGLSAWQNQPPRPLPGWDFAAIRIDPPREELRQAITARLHGMLDNGALAEVEALRVQALDPSLPAMRAHGVPEFLAFLRGDISLPEAMQRAAQATIRYTKRQATWFRNRPFVKPPFLYTIDARIASFQQLSERSMADMLNFIRAFH</sequence>
<feature type="chain" id="PRO_0000377177" description="tRNA dimethylallyltransferase">
    <location>
        <begin position="1"/>
        <end position="319"/>
    </location>
</feature>
<feature type="region of interest" description="Interaction with substrate tRNA" evidence="1">
    <location>
        <begin position="36"/>
        <end position="39"/>
    </location>
</feature>
<feature type="region of interest" description="Interaction with substrate tRNA" evidence="1">
    <location>
        <begin position="160"/>
        <end position="164"/>
    </location>
</feature>
<feature type="binding site" evidence="1">
    <location>
        <begin position="11"/>
        <end position="18"/>
    </location>
    <ligand>
        <name>ATP</name>
        <dbReference type="ChEBI" id="CHEBI:30616"/>
    </ligand>
</feature>
<feature type="binding site" evidence="1">
    <location>
        <begin position="13"/>
        <end position="18"/>
    </location>
    <ligand>
        <name>substrate</name>
    </ligand>
</feature>
<feature type="site" description="Interaction with substrate tRNA" evidence="1">
    <location>
        <position position="102"/>
    </location>
</feature>
<feature type="site" description="Interaction with substrate tRNA" evidence="1">
    <location>
        <position position="124"/>
    </location>
</feature>
<accession>Q0BS22</accession>
<dbReference type="EC" id="2.5.1.75" evidence="1"/>
<dbReference type="EMBL" id="CP000394">
    <property type="protein sequence ID" value="ABI62380.1"/>
    <property type="molecule type" value="Genomic_DNA"/>
</dbReference>
<dbReference type="RefSeq" id="WP_011632184.1">
    <property type="nucleotide sequence ID" value="NC_008343.2"/>
</dbReference>
<dbReference type="SMR" id="Q0BS22"/>
<dbReference type="STRING" id="391165.GbCGDNIH1_1482"/>
<dbReference type="KEGG" id="gbe:GbCGDNIH1_1482"/>
<dbReference type="eggNOG" id="COG0324">
    <property type="taxonomic scope" value="Bacteria"/>
</dbReference>
<dbReference type="HOGENOM" id="CLU_032616_0_1_5"/>
<dbReference type="OrthoDB" id="9776390at2"/>
<dbReference type="Proteomes" id="UP000001963">
    <property type="component" value="Chromosome"/>
</dbReference>
<dbReference type="GO" id="GO:0005524">
    <property type="term" value="F:ATP binding"/>
    <property type="evidence" value="ECO:0007669"/>
    <property type="project" value="UniProtKB-UniRule"/>
</dbReference>
<dbReference type="GO" id="GO:0052381">
    <property type="term" value="F:tRNA dimethylallyltransferase activity"/>
    <property type="evidence" value="ECO:0007669"/>
    <property type="project" value="UniProtKB-UniRule"/>
</dbReference>
<dbReference type="GO" id="GO:0006400">
    <property type="term" value="P:tRNA modification"/>
    <property type="evidence" value="ECO:0007669"/>
    <property type="project" value="TreeGrafter"/>
</dbReference>
<dbReference type="Gene3D" id="1.10.20.140">
    <property type="match status" value="1"/>
</dbReference>
<dbReference type="Gene3D" id="3.40.50.300">
    <property type="entry name" value="P-loop containing nucleotide triphosphate hydrolases"/>
    <property type="match status" value="1"/>
</dbReference>
<dbReference type="HAMAP" id="MF_00185">
    <property type="entry name" value="IPP_trans"/>
    <property type="match status" value="1"/>
</dbReference>
<dbReference type="InterPro" id="IPR039657">
    <property type="entry name" value="Dimethylallyltransferase"/>
</dbReference>
<dbReference type="InterPro" id="IPR018022">
    <property type="entry name" value="IPT"/>
</dbReference>
<dbReference type="InterPro" id="IPR027417">
    <property type="entry name" value="P-loop_NTPase"/>
</dbReference>
<dbReference type="NCBIfam" id="TIGR00174">
    <property type="entry name" value="miaA"/>
    <property type="match status" value="1"/>
</dbReference>
<dbReference type="PANTHER" id="PTHR11088">
    <property type="entry name" value="TRNA DIMETHYLALLYLTRANSFERASE"/>
    <property type="match status" value="1"/>
</dbReference>
<dbReference type="PANTHER" id="PTHR11088:SF60">
    <property type="entry name" value="TRNA DIMETHYLALLYLTRANSFERASE"/>
    <property type="match status" value="1"/>
</dbReference>
<dbReference type="Pfam" id="PF01715">
    <property type="entry name" value="IPPT"/>
    <property type="match status" value="1"/>
</dbReference>
<dbReference type="SUPFAM" id="SSF52540">
    <property type="entry name" value="P-loop containing nucleoside triphosphate hydrolases"/>
    <property type="match status" value="1"/>
</dbReference>
<gene>
    <name evidence="1" type="primary">miaA</name>
    <name type="ordered locus">GbCGDNIH1_1482</name>
</gene>
<evidence type="ECO:0000255" key="1">
    <source>
        <dbReference type="HAMAP-Rule" id="MF_00185"/>
    </source>
</evidence>
<reference key="1">
    <citation type="journal article" date="2007" name="J. Bacteriol.">
        <title>Genome sequence analysis of the emerging human pathogenic acetic acid bacterium Granulibacter bethesdensis.</title>
        <authorList>
            <person name="Greenberg D.E."/>
            <person name="Porcella S.F."/>
            <person name="Zelazny A.M."/>
            <person name="Virtaneva K."/>
            <person name="Sturdevant D.E."/>
            <person name="Kupko J.J. III"/>
            <person name="Barbian K.D."/>
            <person name="Babar A."/>
            <person name="Dorward D.W."/>
            <person name="Holland S.M."/>
        </authorList>
    </citation>
    <scope>NUCLEOTIDE SEQUENCE [LARGE SCALE GENOMIC DNA]</scope>
    <source>
        <strain>ATCC BAA-1260 / CGDNIH1</strain>
    </source>
</reference>
<organism>
    <name type="scientific">Granulibacter bethesdensis (strain ATCC BAA-1260 / CGDNIH1)</name>
    <dbReference type="NCBI Taxonomy" id="391165"/>
    <lineage>
        <taxon>Bacteria</taxon>
        <taxon>Pseudomonadati</taxon>
        <taxon>Pseudomonadota</taxon>
        <taxon>Alphaproteobacteria</taxon>
        <taxon>Acetobacterales</taxon>
        <taxon>Acetobacteraceae</taxon>
        <taxon>Granulibacter</taxon>
    </lineage>
</organism>
<name>MIAA_GRABC</name>
<proteinExistence type="inferred from homology"/>
<comment type="function">
    <text evidence="1">Catalyzes the transfer of a dimethylallyl group onto the adenine at position 37 in tRNAs that read codons beginning with uridine, leading to the formation of N6-(dimethylallyl)adenosine (i(6)A).</text>
</comment>
<comment type="catalytic activity">
    <reaction evidence="1">
        <text>adenosine(37) in tRNA + dimethylallyl diphosphate = N(6)-dimethylallyladenosine(37) in tRNA + diphosphate</text>
        <dbReference type="Rhea" id="RHEA:26482"/>
        <dbReference type="Rhea" id="RHEA-COMP:10162"/>
        <dbReference type="Rhea" id="RHEA-COMP:10375"/>
        <dbReference type="ChEBI" id="CHEBI:33019"/>
        <dbReference type="ChEBI" id="CHEBI:57623"/>
        <dbReference type="ChEBI" id="CHEBI:74411"/>
        <dbReference type="ChEBI" id="CHEBI:74415"/>
        <dbReference type="EC" id="2.5.1.75"/>
    </reaction>
</comment>
<comment type="cofactor">
    <cofactor evidence="1">
        <name>Mg(2+)</name>
        <dbReference type="ChEBI" id="CHEBI:18420"/>
    </cofactor>
</comment>
<comment type="subunit">
    <text evidence="1">Monomer.</text>
</comment>
<comment type="similarity">
    <text evidence="1">Belongs to the IPP transferase family.</text>
</comment>
<keyword id="KW-0067">ATP-binding</keyword>
<keyword id="KW-0460">Magnesium</keyword>
<keyword id="KW-0547">Nucleotide-binding</keyword>
<keyword id="KW-1185">Reference proteome</keyword>
<keyword id="KW-0808">Transferase</keyword>
<keyword id="KW-0819">tRNA processing</keyword>